<proteinExistence type="inferred from homology"/>
<feature type="chain" id="PRO_1000139023" description="Acyl carrier protein">
    <location>
        <begin position="1"/>
        <end position="78"/>
    </location>
</feature>
<feature type="domain" description="Carrier" evidence="2">
    <location>
        <begin position="2"/>
        <end position="77"/>
    </location>
</feature>
<feature type="modified residue" description="O-(pantetheine 4'-phosphoryl)serine" evidence="2">
    <location>
        <position position="37"/>
    </location>
</feature>
<gene>
    <name evidence="1" type="primary">acpP</name>
    <name type="ordered locus">ECIAI1_1129</name>
</gene>
<organism>
    <name type="scientific">Escherichia coli O8 (strain IAI1)</name>
    <dbReference type="NCBI Taxonomy" id="585034"/>
    <lineage>
        <taxon>Bacteria</taxon>
        <taxon>Pseudomonadati</taxon>
        <taxon>Pseudomonadota</taxon>
        <taxon>Gammaproteobacteria</taxon>
        <taxon>Enterobacterales</taxon>
        <taxon>Enterobacteriaceae</taxon>
        <taxon>Escherichia</taxon>
    </lineage>
</organism>
<dbReference type="EMBL" id="CU928160">
    <property type="protein sequence ID" value="CAQ97993.1"/>
    <property type="molecule type" value="Genomic_DNA"/>
</dbReference>
<dbReference type="RefSeq" id="WP_000103754.1">
    <property type="nucleotide sequence ID" value="NC_011741.1"/>
</dbReference>
<dbReference type="SMR" id="B7LX28"/>
<dbReference type="GeneID" id="98387866"/>
<dbReference type="KEGG" id="ecr:ECIAI1_1129"/>
<dbReference type="HOGENOM" id="CLU_108696_5_1_6"/>
<dbReference type="UniPathway" id="UPA00094"/>
<dbReference type="GO" id="GO:0005829">
    <property type="term" value="C:cytosol"/>
    <property type="evidence" value="ECO:0007669"/>
    <property type="project" value="TreeGrafter"/>
</dbReference>
<dbReference type="GO" id="GO:0016020">
    <property type="term" value="C:membrane"/>
    <property type="evidence" value="ECO:0007669"/>
    <property type="project" value="GOC"/>
</dbReference>
<dbReference type="GO" id="GO:0000035">
    <property type="term" value="F:acyl binding"/>
    <property type="evidence" value="ECO:0007669"/>
    <property type="project" value="TreeGrafter"/>
</dbReference>
<dbReference type="GO" id="GO:0000036">
    <property type="term" value="F:acyl carrier activity"/>
    <property type="evidence" value="ECO:0007669"/>
    <property type="project" value="UniProtKB-UniRule"/>
</dbReference>
<dbReference type="GO" id="GO:0009245">
    <property type="term" value="P:lipid A biosynthetic process"/>
    <property type="evidence" value="ECO:0007669"/>
    <property type="project" value="TreeGrafter"/>
</dbReference>
<dbReference type="FunFam" id="1.10.1200.10:FF:000001">
    <property type="entry name" value="Acyl carrier protein"/>
    <property type="match status" value="1"/>
</dbReference>
<dbReference type="Gene3D" id="1.10.1200.10">
    <property type="entry name" value="ACP-like"/>
    <property type="match status" value="1"/>
</dbReference>
<dbReference type="HAMAP" id="MF_01217">
    <property type="entry name" value="Acyl_carrier"/>
    <property type="match status" value="1"/>
</dbReference>
<dbReference type="InterPro" id="IPR003231">
    <property type="entry name" value="ACP"/>
</dbReference>
<dbReference type="InterPro" id="IPR036736">
    <property type="entry name" value="ACP-like_sf"/>
</dbReference>
<dbReference type="InterPro" id="IPR009081">
    <property type="entry name" value="PP-bd_ACP"/>
</dbReference>
<dbReference type="InterPro" id="IPR006162">
    <property type="entry name" value="Ppantetheine_attach_site"/>
</dbReference>
<dbReference type="NCBIfam" id="TIGR00517">
    <property type="entry name" value="acyl_carrier"/>
    <property type="match status" value="1"/>
</dbReference>
<dbReference type="NCBIfam" id="NF002148">
    <property type="entry name" value="PRK00982.1-2"/>
    <property type="match status" value="1"/>
</dbReference>
<dbReference type="NCBIfam" id="NF002149">
    <property type="entry name" value="PRK00982.1-3"/>
    <property type="match status" value="1"/>
</dbReference>
<dbReference type="NCBIfam" id="NF002150">
    <property type="entry name" value="PRK00982.1-4"/>
    <property type="match status" value="1"/>
</dbReference>
<dbReference type="NCBIfam" id="NF002151">
    <property type="entry name" value="PRK00982.1-5"/>
    <property type="match status" value="1"/>
</dbReference>
<dbReference type="PANTHER" id="PTHR20863">
    <property type="entry name" value="ACYL CARRIER PROTEIN"/>
    <property type="match status" value="1"/>
</dbReference>
<dbReference type="PANTHER" id="PTHR20863:SF76">
    <property type="entry name" value="CARRIER DOMAIN-CONTAINING PROTEIN"/>
    <property type="match status" value="1"/>
</dbReference>
<dbReference type="Pfam" id="PF00550">
    <property type="entry name" value="PP-binding"/>
    <property type="match status" value="1"/>
</dbReference>
<dbReference type="SUPFAM" id="SSF47336">
    <property type="entry name" value="ACP-like"/>
    <property type="match status" value="1"/>
</dbReference>
<dbReference type="PROSITE" id="PS50075">
    <property type="entry name" value="CARRIER"/>
    <property type="match status" value="1"/>
</dbReference>
<dbReference type="PROSITE" id="PS00012">
    <property type="entry name" value="PHOSPHOPANTETHEINE"/>
    <property type="match status" value="1"/>
</dbReference>
<keyword id="KW-0963">Cytoplasm</keyword>
<keyword id="KW-0275">Fatty acid biosynthesis</keyword>
<keyword id="KW-0276">Fatty acid metabolism</keyword>
<keyword id="KW-0444">Lipid biosynthesis</keyword>
<keyword id="KW-0443">Lipid metabolism</keyword>
<keyword id="KW-0596">Phosphopantetheine</keyword>
<keyword id="KW-0597">Phosphoprotein</keyword>
<comment type="function">
    <text evidence="1">Carrier of the growing fatty acid chain in fatty acid biosynthesis.</text>
</comment>
<comment type="pathway">
    <text evidence="1">Lipid metabolism; fatty acid biosynthesis.</text>
</comment>
<comment type="subcellular location">
    <subcellularLocation>
        <location evidence="1">Cytoplasm</location>
    </subcellularLocation>
</comment>
<comment type="PTM">
    <text evidence="1">4'-phosphopantetheine is transferred from CoA to a specific serine of apo-ACP by AcpS. This modification is essential for activity because fatty acids are bound in thioester linkage to the sulfhydryl of the prosthetic group.</text>
</comment>
<comment type="similarity">
    <text evidence="1">Belongs to the acyl carrier protein (ACP) family.</text>
</comment>
<name>ACP_ECO8A</name>
<accession>B7LX28</accession>
<sequence length="78" mass="8640">MSTIEERVKKIIGEQLGVKQEEVTNNASFVEDLGADSLDTVELVMALEEEFDTEIPDEEAEKITTVQAAIDYINGHQA</sequence>
<evidence type="ECO:0000255" key="1">
    <source>
        <dbReference type="HAMAP-Rule" id="MF_01217"/>
    </source>
</evidence>
<evidence type="ECO:0000255" key="2">
    <source>
        <dbReference type="PROSITE-ProRule" id="PRU00258"/>
    </source>
</evidence>
<protein>
    <recommendedName>
        <fullName evidence="1">Acyl carrier protein</fullName>
        <shortName evidence="1">ACP</shortName>
    </recommendedName>
</protein>
<reference key="1">
    <citation type="journal article" date="2009" name="PLoS Genet.">
        <title>Organised genome dynamics in the Escherichia coli species results in highly diverse adaptive paths.</title>
        <authorList>
            <person name="Touchon M."/>
            <person name="Hoede C."/>
            <person name="Tenaillon O."/>
            <person name="Barbe V."/>
            <person name="Baeriswyl S."/>
            <person name="Bidet P."/>
            <person name="Bingen E."/>
            <person name="Bonacorsi S."/>
            <person name="Bouchier C."/>
            <person name="Bouvet O."/>
            <person name="Calteau A."/>
            <person name="Chiapello H."/>
            <person name="Clermont O."/>
            <person name="Cruveiller S."/>
            <person name="Danchin A."/>
            <person name="Diard M."/>
            <person name="Dossat C."/>
            <person name="Karoui M.E."/>
            <person name="Frapy E."/>
            <person name="Garry L."/>
            <person name="Ghigo J.M."/>
            <person name="Gilles A.M."/>
            <person name="Johnson J."/>
            <person name="Le Bouguenec C."/>
            <person name="Lescat M."/>
            <person name="Mangenot S."/>
            <person name="Martinez-Jehanne V."/>
            <person name="Matic I."/>
            <person name="Nassif X."/>
            <person name="Oztas S."/>
            <person name="Petit M.A."/>
            <person name="Pichon C."/>
            <person name="Rouy Z."/>
            <person name="Ruf C.S."/>
            <person name="Schneider D."/>
            <person name="Tourret J."/>
            <person name="Vacherie B."/>
            <person name="Vallenet D."/>
            <person name="Medigue C."/>
            <person name="Rocha E.P.C."/>
            <person name="Denamur E."/>
        </authorList>
    </citation>
    <scope>NUCLEOTIDE SEQUENCE [LARGE SCALE GENOMIC DNA]</scope>
    <source>
        <strain>IAI1</strain>
    </source>
</reference>